<gene>
    <name evidence="1" type="primary">rplN</name>
    <name type="ordered locus">NMB0152</name>
</gene>
<name>RL14_NEIMB</name>
<feature type="chain" id="PRO_0000266511" description="Large ribosomal subunit protein uL14">
    <location>
        <begin position="1"/>
        <end position="122"/>
    </location>
</feature>
<protein>
    <recommendedName>
        <fullName evidence="1">Large ribosomal subunit protein uL14</fullName>
    </recommendedName>
    <alternativeName>
        <fullName evidence="2">50S ribosomal protein L14</fullName>
    </alternativeName>
</protein>
<proteinExistence type="evidence at protein level"/>
<accession>Q7DDT2</accession>
<comment type="function">
    <text evidence="1">Binds to 23S rRNA. Forms part of two intersubunit bridges in the 70S ribosome.</text>
</comment>
<comment type="subunit">
    <text evidence="1">Part of the 50S ribosomal subunit. Forms a cluster with proteins L3 and L19. In the 70S ribosome, L14 and L19 interact and together make contacts with the 16S rRNA in bridges B5 and B8.</text>
</comment>
<comment type="miscellaneous">
    <text>Present in outer membrane vesicle formulations which are used as vaccines in human.</text>
</comment>
<comment type="similarity">
    <text evidence="1">Belongs to the universal ribosomal protein uL14 family.</text>
</comment>
<organism>
    <name type="scientific">Neisseria meningitidis serogroup B (strain ATCC BAA-335 / MC58)</name>
    <dbReference type="NCBI Taxonomy" id="122586"/>
    <lineage>
        <taxon>Bacteria</taxon>
        <taxon>Pseudomonadati</taxon>
        <taxon>Pseudomonadota</taxon>
        <taxon>Betaproteobacteria</taxon>
        <taxon>Neisseriales</taxon>
        <taxon>Neisseriaceae</taxon>
        <taxon>Neisseria</taxon>
    </lineage>
</organism>
<evidence type="ECO:0000255" key="1">
    <source>
        <dbReference type="HAMAP-Rule" id="MF_01367"/>
    </source>
</evidence>
<evidence type="ECO:0000305" key="2"/>
<keyword id="KW-1185">Reference proteome</keyword>
<keyword id="KW-0687">Ribonucleoprotein</keyword>
<keyword id="KW-0689">Ribosomal protein</keyword>
<keyword id="KW-0694">RNA-binding</keyword>
<keyword id="KW-0699">rRNA-binding</keyword>
<sequence>MIQMQTILDVADNSGARRVMCIKVLGGSKRRYASVGDIIKVAVKDAAPRGRVKKGDVYNAVVVRTAKGVRRPDGALIKFDNNAAVLLNNKLEPLGTRIFGPVTRELRTERFMKIVSLAPEVL</sequence>
<reference key="1">
    <citation type="journal article" date="2000" name="Science">
        <title>Complete genome sequence of Neisseria meningitidis serogroup B strain MC58.</title>
        <authorList>
            <person name="Tettelin H."/>
            <person name="Saunders N.J."/>
            <person name="Heidelberg J.F."/>
            <person name="Jeffries A.C."/>
            <person name="Nelson K.E."/>
            <person name="Eisen J.A."/>
            <person name="Ketchum K.A."/>
            <person name="Hood D.W."/>
            <person name="Peden J.F."/>
            <person name="Dodson R.J."/>
            <person name="Nelson W.C."/>
            <person name="Gwinn M.L."/>
            <person name="DeBoy R.T."/>
            <person name="Peterson J.D."/>
            <person name="Hickey E.K."/>
            <person name="Haft D.H."/>
            <person name="Salzberg S.L."/>
            <person name="White O."/>
            <person name="Fleischmann R.D."/>
            <person name="Dougherty B.A."/>
            <person name="Mason T.M."/>
            <person name="Ciecko A."/>
            <person name="Parksey D.S."/>
            <person name="Blair E."/>
            <person name="Cittone H."/>
            <person name="Clark E.B."/>
            <person name="Cotton M.D."/>
            <person name="Utterback T.R."/>
            <person name="Khouri H.M."/>
            <person name="Qin H."/>
            <person name="Vamathevan J.J."/>
            <person name="Gill J."/>
            <person name="Scarlato V."/>
            <person name="Masignani V."/>
            <person name="Pizza M."/>
            <person name="Grandi G."/>
            <person name="Sun L."/>
            <person name="Smith H.O."/>
            <person name="Fraser C.M."/>
            <person name="Moxon E.R."/>
            <person name="Rappuoli R."/>
            <person name="Venter J.C."/>
        </authorList>
    </citation>
    <scope>NUCLEOTIDE SEQUENCE [LARGE SCALE GENOMIC DNA]</scope>
    <source>
        <strain>ATCC BAA-335 / MC58</strain>
    </source>
</reference>
<reference key="2">
    <citation type="journal article" date="2005" name="Hum. Vaccin.">
        <title>Characterization of the protein content of a meningococcal outer membrane vesicle vaccine by polyacrylamide gel electrophoresis and mass spectrometry.</title>
        <authorList>
            <person name="Vipond C."/>
            <person name="Wheeler J.X."/>
            <person name="Jones C."/>
            <person name="Feavers I.M."/>
            <person name="Suker J."/>
        </authorList>
    </citation>
    <scope>IDENTIFICATION BY MASS SPECTROMETRY [LARGE SCALE ANALYSIS]</scope>
</reference>
<dbReference type="EMBL" id="AE002098">
    <property type="protein sequence ID" value="AAF40610.1"/>
    <property type="molecule type" value="Genomic_DNA"/>
</dbReference>
<dbReference type="RefSeq" id="NP_273210.1">
    <property type="nucleotide sequence ID" value="NC_003112.2"/>
</dbReference>
<dbReference type="RefSeq" id="WP_002215434.1">
    <property type="nucleotide sequence ID" value="NC_003112.2"/>
</dbReference>
<dbReference type="SMR" id="Q7DDT2"/>
<dbReference type="FunCoup" id="Q7DDT2">
    <property type="interactions" value="562"/>
</dbReference>
<dbReference type="STRING" id="122586.NMB0152"/>
<dbReference type="PaxDb" id="122586-NMB0152"/>
<dbReference type="GeneID" id="94582047"/>
<dbReference type="KEGG" id="nme:NMB0152"/>
<dbReference type="PATRIC" id="fig|122586.8.peg.193"/>
<dbReference type="HOGENOM" id="CLU_095071_2_1_4"/>
<dbReference type="InParanoid" id="Q7DDT2"/>
<dbReference type="OrthoDB" id="9806379at2"/>
<dbReference type="PRO" id="PR:Q7DDT2"/>
<dbReference type="Proteomes" id="UP000000425">
    <property type="component" value="Chromosome"/>
</dbReference>
<dbReference type="GO" id="GO:0022625">
    <property type="term" value="C:cytosolic large ribosomal subunit"/>
    <property type="evidence" value="ECO:0000318"/>
    <property type="project" value="GO_Central"/>
</dbReference>
<dbReference type="GO" id="GO:0070180">
    <property type="term" value="F:large ribosomal subunit rRNA binding"/>
    <property type="evidence" value="ECO:0000318"/>
    <property type="project" value="GO_Central"/>
</dbReference>
<dbReference type="GO" id="GO:0003735">
    <property type="term" value="F:structural constituent of ribosome"/>
    <property type="evidence" value="ECO:0000318"/>
    <property type="project" value="GO_Central"/>
</dbReference>
<dbReference type="GO" id="GO:0006412">
    <property type="term" value="P:translation"/>
    <property type="evidence" value="ECO:0007669"/>
    <property type="project" value="UniProtKB-UniRule"/>
</dbReference>
<dbReference type="CDD" id="cd00337">
    <property type="entry name" value="Ribosomal_uL14"/>
    <property type="match status" value="1"/>
</dbReference>
<dbReference type="FunFam" id="2.40.150.20:FF:000001">
    <property type="entry name" value="50S ribosomal protein L14"/>
    <property type="match status" value="1"/>
</dbReference>
<dbReference type="Gene3D" id="2.40.150.20">
    <property type="entry name" value="Ribosomal protein L14"/>
    <property type="match status" value="1"/>
</dbReference>
<dbReference type="HAMAP" id="MF_01367">
    <property type="entry name" value="Ribosomal_uL14"/>
    <property type="match status" value="1"/>
</dbReference>
<dbReference type="InterPro" id="IPR000218">
    <property type="entry name" value="Ribosomal_uL14"/>
</dbReference>
<dbReference type="InterPro" id="IPR005745">
    <property type="entry name" value="Ribosomal_uL14_bac-type"/>
</dbReference>
<dbReference type="InterPro" id="IPR019972">
    <property type="entry name" value="Ribosomal_uL14_CS"/>
</dbReference>
<dbReference type="InterPro" id="IPR036853">
    <property type="entry name" value="Ribosomal_uL14_sf"/>
</dbReference>
<dbReference type="NCBIfam" id="TIGR01067">
    <property type="entry name" value="rplN_bact"/>
    <property type="match status" value="1"/>
</dbReference>
<dbReference type="PANTHER" id="PTHR11761">
    <property type="entry name" value="50S/60S RIBOSOMAL PROTEIN L14/L23"/>
    <property type="match status" value="1"/>
</dbReference>
<dbReference type="PANTHER" id="PTHR11761:SF3">
    <property type="entry name" value="LARGE RIBOSOMAL SUBUNIT PROTEIN UL14M"/>
    <property type="match status" value="1"/>
</dbReference>
<dbReference type="Pfam" id="PF00238">
    <property type="entry name" value="Ribosomal_L14"/>
    <property type="match status" value="1"/>
</dbReference>
<dbReference type="SMART" id="SM01374">
    <property type="entry name" value="Ribosomal_L14"/>
    <property type="match status" value="1"/>
</dbReference>
<dbReference type="SUPFAM" id="SSF50193">
    <property type="entry name" value="Ribosomal protein L14"/>
    <property type="match status" value="1"/>
</dbReference>
<dbReference type="PROSITE" id="PS00049">
    <property type="entry name" value="RIBOSOMAL_L14"/>
    <property type="match status" value="1"/>
</dbReference>